<proteinExistence type="evidence at protein level"/>
<organism>
    <name type="scientific">Trypanosoma brucei brucei (strain 927/4 GUTat10.1)</name>
    <dbReference type="NCBI Taxonomy" id="185431"/>
    <lineage>
        <taxon>Eukaryota</taxon>
        <taxon>Discoba</taxon>
        <taxon>Euglenozoa</taxon>
        <taxon>Kinetoplastea</taxon>
        <taxon>Metakinetoplastina</taxon>
        <taxon>Trypanosomatida</taxon>
        <taxon>Trypanosomatidae</taxon>
        <taxon>Trypanosoma</taxon>
    </lineage>
</organism>
<accession>P86927</accession>
<accession>P82863</accession>
<accession>Q38FA5</accession>
<feature type="transit peptide" description="Mitochondrion">
    <location>
        <begin position="1"/>
        <end position="44"/>
    </location>
</feature>
<feature type="chain" id="PRO_0000278161" description="RNA-editing ligase 1, mitochondrial">
    <location>
        <begin position="45"/>
        <end position="469"/>
    </location>
</feature>
<feature type="region of interest" description="Disordered" evidence="2">
    <location>
        <begin position="450"/>
        <end position="469"/>
    </location>
</feature>
<feature type="active site" description="N6-AMP-lysine intermediate" evidence="6">
    <location>
        <position position="87"/>
    </location>
</feature>
<feature type="binding site" evidence="4 8">
    <location>
        <begin position="59"/>
        <end position="61"/>
    </location>
    <ligand>
        <name>ATP</name>
        <dbReference type="ChEBI" id="CHEBI:30616"/>
    </ligand>
</feature>
<feature type="binding site" evidence="4 8">
    <location>
        <begin position="86"/>
        <end position="92"/>
    </location>
    <ligand>
        <name>ATP</name>
        <dbReference type="ChEBI" id="CHEBI:30616"/>
    </ligand>
</feature>
<feature type="binding site" evidence="4 8">
    <location>
        <position position="92"/>
    </location>
    <ligand>
        <name>ATP</name>
        <dbReference type="ChEBI" id="CHEBI:30616"/>
    </ligand>
</feature>
<feature type="binding site" evidence="4 8">
    <location>
        <position position="111"/>
    </location>
    <ligand>
        <name>ATP</name>
        <dbReference type="ChEBI" id="CHEBI:30616"/>
    </ligand>
</feature>
<feature type="binding site" evidence="4 8">
    <location>
        <position position="159"/>
    </location>
    <ligand>
        <name>ATP</name>
        <dbReference type="ChEBI" id="CHEBI:30616"/>
    </ligand>
</feature>
<feature type="binding site" evidence="4 8">
    <location>
        <position position="209"/>
    </location>
    <ligand>
        <name>ATP</name>
        <dbReference type="ChEBI" id="CHEBI:30616"/>
    </ligand>
</feature>
<feature type="binding site" evidence="4 8">
    <location>
        <begin position="307"/>
        <end position="309"/>
    </location>
    <ligand>
        <name>ATP</name>
        <dbReference type="ChEBI" id="CHEBI:30616"/>
    </ligand>
</feature>
<feature type="helix" evidence="9">
    <location>
        <begin position="66"/>
        <end position="74"/>
    </location>
</feature>
<feature type="helix" evidence="9">
    <location>
        <begin position="77"/>
        <end position="79"/>
    </location>
</feature>
<feature type="strand" evidence="9">
    <location>
        <begin position="82"/>
        <end position="87"/>
    </location>
</feature>
<feature type="strand" evidence="9">
    <location>
        <begin position="90"/>
        <end position="100"/>
    </location>
</feature>
<feature type="strand" evidence="9">
    <location>
        <begin position="103"/>
        <end position="110"/>
    </location>
</feature>
<feature type="helix" evidence="9">
    <location>
        <begin position="124"/>
        <end position="127"/>
    </location>
</feature>
<feature type="helix" evidence="9">
    <location>
        <begin position="128"/>
        <end position="146"/>
    </location>
</feature>
<feature type="strand" evidence="9">
    <location>
        <begin position="152"/>
        <end position="164"/>
    </location>
</feature>
<feature type="strand" evidence="9">
    <location>
        <begin position="176"/>
        <end position="178"/>
    </location>
</feature>
<feature type="strand" evidence="9">
    <location>
        <begin position="184"/>
        <end position="186"/>
    </location>
</feature>
<feature type="helix" evidence="9">
    <location>
        <begin position="187"/>
        <end position="189"/>
    </location>
</feature>
<feature type="strand" evidence="9">
    <location>
        <begin position="201"/>
        <end position="216"/>
    </location>
</feature>
<feature type="helix" evidence="9">
    <location>
        <begin position="219"/>
        <end position="221"/>
    </location>
</feature>
<feature type="strand" evidence="9">
    <location>
        <begin position="222"/>
        <end position="224"/>
    </location>
</feature>
<feature type="helix" evidence="9">
    <location>
        <begin position="227"/>
        <end position="235"/>
    </location>
</feature>
<feature type="strand" evidence="9">
    <location>
        <begin position="246"/>
        <end position="250"/>
    </location>
</feature>
<feature type="helix" evidence="9">
    <location>
        <begin position="251"/>
        <end position="255"/>
    </location>
</feature>
<feature type="helix" evidence="9">
    <location>
        <begin position="259"/>
        <end position="261"/>
    </location>
</feature>
<feature type="helix" evidence="9">
    <location>
        <begin position="266"/>
        <end position="269"/>
    </location>
</feature>
<feature type="strand" evidence="9">
    <location>
        <begin position="284"/>
        <end position="289"/>
    </location>
</feature>
<feature type="turn" evidence="9">
    <location>
        <begin position="290"/>
        <end position="293"/>
    </location>
</feature>
<feature type="helix" evidence="9">
    <location>
        <begin position="295"/>
        <end position="298"/>
    </location>
</feature>
<feature type="strand" evidence="9">
    <location>
        <begin position="305"/>
        <end position="309"/>
    </location>
</feature>
<feature type="helix" evidence="9">
    <location>
        <begin position="311"/>
        <end position="315"/>
    </location>
</feature>
<sequence>MQLQRLGAPLLKRLVGGCIRQSTAPIMPCVVVSGSGGFLTPVRTYMPLPNDQSDFSPYIEIDLPSESRIQSLHKSGLAAQEWVACEKVHGTNFGIYLINQGDHEVVRFAKRSGIMDPNENFFGYHILIDEFTAQIRILNDLLKQKYGLSRVGRLVLNGELFGAKYKHPLVPKSEKWCTLPNGKKFPIAGVQIQREPFPQYSPELHFFAFDIKYSVSGAEEDFVLLGYDEFVEFSSKVPNLLYARALVRGTLDECLAFDVENFMTPLPALLGLGNYPLEGNLAEGVVIRHVRRGDPAVEKHNVSTIIKLRCSSFMELKHPGKQKELKETFIDTVRSGALRRVRGNVTVISDSMLPQVEAAANDLLLNNVSDGRLSNVLSKIGREPLLSGEVSQVDVALMLAKDALKDFLKEVDSLVLNTTLAFRKLLITNVYFESKRLVEQKWKELMQEEAAAQSEAIPPLSPAAPTKGE</sequence>
<name>RLGM1_TRYB2</name>
<keyword id="KW-0002">3D-structure</keyword>
<keyword id="KW-0067">ATP-binding</keyword>
<keyword id="KW-0436">Ligase</keyword>
<keyword id="KW-0496">Mitochondrion</keyword>
<keyword id="KW-0507">mRNA processing</keyword>
<keyword id="KW-0547">Nucleotide-binding</keyword>
<keyword id="KW-1185">Reference proteome</keyword>
<keyword id="KW-0694">RNA-binding</keyword>
<keyword id="KW-0809">Transit peptide</keyword>
<protein>
    <recommendedName>
        <fullName>RNA-editing ligase 1, mitochondrial</fullName>
        <shortName>RNA ligase 1</shortName>
        <ecNumber evidence="3 4">6.5.1.3</ecNumber>
    </recommendedName>
    <alternativeName>
        <fullName>TbMP52</fullName>
    </alternativeName>
</protein>
<reference key="1">
    <citation type="journal article" date="2005" name="Science">
        <title>The genome of the African trypanosome Trypanosoma brucei.</title>
        <authorList>
            <person name="Berriman M."/>
            <person name="Ghedin E."/>
            <person name="Hertz-Fowler C."/>
            <person name="Blandin G."/>
            <person name="Renauld H."/>
            <person name="Bartholomeu D.C."/>
            <person name="Lennard N.J."/>
            <person name="Caler E."/>
            <person name="Hamlin N.E."/>
            <person name="Haas B."/>
            <person name="Bohme U."/>
            <person name="Hannick L."/>
            <person name="Aslett M.A."/>
            <person name="Shallom J."/>
            <person name="Marcello L."/>
            <person name="Hou L."/>
            <person name="Wickstead B."/>
            <person name="Alsmark U.C.M."/>
            <person name="Arrowsmith C."/>
            <person name="Atkin R.J."/>
            <person name="Barron A.J."/>
            <person name="Bringaud F."/>
            <person name="Brooks K."/>
            <person name="Carrington M."/>
            <person name="Cherevach I."/>
            <person name="Chillingworth T.J."/>
            <person name="Churcher C."/>
            <person name="Clark L.N."/>
            <person name="Corton C.H."/>
            <person name="Cronin A."/>
            <person name="Davies R.M."/>
            <person name="Doggett J."/>
            <person name="Djikeng A."/>
            <person name="Feldblyum T."/>
            <person name="Field M.C."/>
            <person name="Fraser A."/>
            <person name="Goodhead I."/>
            <person name="Hance Z."/>
            <person name="Harper D."/>
            <person name="Harris B.R."/>
            <person name="Hauser H."/>
            <person name="Hostetler J."/>
            <person name="Ivens A."/>
            <person name="Jagels K."/>
            <person name="Johnson D."/>
            <person name="Johnson J."/>
            <person name="Jones K."/>
            <person name="Kerhornou A.X."/>
            <person name="Koo H."/>
            <person name="Larke N."/>
            <person name="Landfear S."/>
            <person name="Larkin C."/>
            <person name="Leech V."/>
            <person name="Line A."/>
            <person name="Lord A."/>
            <person name="Macleod A."/>
            <person name="Mooney P.J."/>
            <person name="Moule S."/>
            <person name="Martin D.M."/>
            <person name="Morgan G.W."/>
            <person name="Mungall K."/>
            <person name="Norbertczak H."/>
            <person name="Ormond D."/>
            <person name="Pai G."/>
            <person name="Peacock C.S."/>
            <person name="Peterson J."/>
            <person name="Quail M.A."/>
            <person name="Rabbinowitsch E."/>
            <person name="Rajandream M.A."/>
            <person name="Reitter C."/>
            <person name="Salzberg S.L."/>
            <person name="Sanders M."/>
            <person name="Schobel S."/>
            <person name="Sharp S."/>
            <person name="Simmonds M."/>
            <person name="Simpson A.J."/>
            <person name="Tallon L."/>
            <person name="Turner C.M."/>
            <person name="Tait A."/>
            <person name="Tivey A.R."/>
            <person name="Van Aken S."/>
            <person name="Walker D."/>
            <person name="Wanless D."/>
            <person name="Wang S."/>
            <person name="White B."/>
            <person name="White O."/>
            <person name="Whitehead S."/>
            <person name="Woodward J."/>
            <person name="Wortman J."/>
            <person name="Adams M.D."/>
            <person name="Embley T.M."/>
            <person name="Gull K."/>
            <person name="Ullu E."/>
            <person name="Barry J.D."/>
            <person name="Fairlamb A.H."/>
            <person name="Opperdoes F."/>
            <person name="Barrell B.G."/>
            <person name="Donelson J.E."/>
            <person name="Hall N."/>
            <person name="Fraser C.M."/>
            <person name="Melville S.E."/>
            <person name="El-Sayed N.M.A."/>
        </authorList>
    </citation>
    <scope>NUCLEOTIDE SEQUENCE [LARGE SCALE GENOMIC DNA]</scope>
    <source>
        <strain evidence="7">927/4 GUTat10.1</strain>
    </source>
</reference>
<reference key="2">
    <citation type="journal article" date="2001" name="Science">
        <title>An RNA ligase essential for RNA editing and survival of the bloodstream form of Trypanosoma brucei.</title>
        <authorList>
            <person name="Schnaufer A."/>
            <person name="Panigrahi A.K."/>
            <person name="Panicucci B."/>
            <person name="Igo R.P. Jr."/>
            <person name="Wirtz E."/>
            <person name="Salavati R."/>
            <person name="Stuart K."/>
        </authorList>
    </citation>
    <scope>FUNCTION</scope>
    <scope>CATALYTIC ACTIVITY</scope>
</reference>
<reference key="3">
    <citation type="journal article" date="2004" name="J. Mol. Biol.">
        <title>High resolution crystal structure of a key editosome enzyme from Trypanosoma brucei: RNA editing ligase 1.</title>
        <authorList>
            <person name="Deng J."/>
            <person name="Schnaufer A."/>
            <person name="Salavati R."/>
            <person name="Stuart K.D."/>
            <person name="Hol W.G.J."/>
        </authorList>
    </citation>
    <scope>X-RAY CRYSTALLOGRAPHY (1.2 ANGSTROMS) OF 51-324 IN COMPLEX WITH ATP</scope>
    <scope>FUNCTION</scope>
    <scope>CATALYTIC ACTIVITY</scope>
</reference>
<dbReference type="EC" id="6.5.1.3" evidence="3 4"/>
<dbReference type="EMBL" id="CM000207">
    <property type="protein sequence ID" value="EAN76515.1"/>
    <property type="molecule type" value="Genomic_DNA"/>
</dbReference>
<dbReference type="RefSeq" id="XP_803740.1">
    <property type="nucleotide sequence ID" value="XM_798647.1"/>
</dbReference>
<dbReference type="PDB" id="1XDN">
    <property type="method" value="X-ray"/>
    <property type="resolution" value="1.20 A"/>
    <property type="chains" value="A=51-324"/>
</dbReference>
<dbReference type="PDBsum" id="1XDN"/>
<dbReference type="SMR" id="P86927"/>
<dbReference type="STRING" id="185431.P86927"/>
<dbReference type="PaxDb" id="5691-EAN76515"/>
<dbReference type="GeneID" id="3660066"/>
<dbReference type="KEGG" id="tbr:Tb09.160.2970"/>
<dbReference type="VEuPathDB" id="TriTrypDB:Tb927.9.4360"/>
<dbReference type="eggNOG" id="ENOG502QV9S">
    <property type="taxonomic scope" value="Eukaryota"/>
</dbReference>
<dbReference type="InParanoid" id="P86927"/>
<dbReference type="OMA" id="AQEWVAC"/>
<dbReference type="OrthoDB" id="6142248at2759"/>
<dbReference type="BRENDA" id="6.5.1.3">
    <property type="organism ID" value="6519"/>
</dbReference>
<dbReference type="EvolutionaryTrace" id="P86927"/>
<dbReference type="Proteomes" id="UP000008524">
    <property type="component" value="Chromosome 9"/>
</dbReference>
<dbReference type="GO" id="GO:0005737">
    <property type="term" value="C:cytoplasm"/>
    <property type="evidence" value="ECO:0000314"/>
    <property type="project" value="GeneDB"/>
</dbReference>
<dbReference type="GO" id="GO:0020023">
    <property type="term" value="C:kinetoplast"/>
    <property type="evidence" value="ECO:0000314"/>
    <property type="project" value="GeneDB"/>
</dbReference>
<dbReference type="GO" id="GO:0031019">
    <property type="term" value="C:mitochondrial mRNA editing complex"/>
    <property type="evidence" value="ECO:0000314"/>
    <property type="project" value="GeneDB"/>
</dbReference>
<dbReference type="GO" id="GO:0005739">
    <property type="term" value="C:mitochondrion"/>
    <property type="evidence" value="ECO:0000314"/>
    <property type="project" value="UniProtKB"/>
</dbReference>
<dbReference type="GO" id="GO:0005524">
    <property type="term" value="F:ATP binding"/>
    <property type="evidence" value="ECO:0007669"/>
    <property type="project" value="UniProtKB-KW"/>
</dbReference>
<dbReference type="GO" id="GO:0003723">
    <property type="term" value="F:RNA binding"/>
    <property type="evidence" value="ECO:0007669"/>
    <property type="project" value="UniProtKB-KW"/>
</dbReference>
<dbReference type="GO" id="GO:0003972">
    <property type="term" value="F:RNA ligase (ATP) activity"/>
    <property type="evidence" value="ECO:0007669"/>
    <property type="project" value="UniProtKB-EC"/>
</dbReference>
<dbReference type="GO" id="GO:0006397">
    <property type="term" value="P:mRNA processing"/>
    <property type="evidence" value="ECO:0007669"/>
    <property type="project" value="UniProtKB-KW"/>
</dbReference>
<dbReference type="GO" id="GO:0009451">
    <property type="term" value="P:RNA modification"/>
    <property type="evidence" value="ECO:0000314"/>
    <property type="project" value="GeneDB"/>
</dbReference>
<dbReference type="FunFam" id="3.30.470.30:FF:000019">
    <property type="entry name" value="Mitochondrial RNA ligase 1"/>
    <property type="match status" value="1"/>
</dbReference>
<dbReference type="FunFam" id="1.10.10.1810:FF:000001">
    <property type="entry name" value="RNA-editing ligase 1, mitochondrial"/>
    <property type="match status" value="1"/>
</dbReference>
<dbReference type="Gene3D" id="3.30.1490.70">
    <property type="match status" value="1"/>
</dbReference>
<dbReference type="Gene3D" id="3.30.470.30">
    <property type="entry name" value="DNA ligase/mRNA capping enzyme"/>
    <property type="match status" value="1"/>
</dbReference>
<dbReference type="Gene3D" id="1.10.10.1810">
    <property type="entry name" value="RNA ligase"/>
    <property type="match status" value="1"/>
</dbReference>
<dbReference type="InterPro" id="IPR012647">
    <property type="entry name" value="RNA_lig_RNL2"/>
</dbReference>
<dbReference type="InterPro" id="IPR021122">
    <property type="entry name" value="RNA_ligase_dom_REL/Rnl2"/>
</dbReference>
<dbReference type="InterPro" id="IPR041948">
    <property type="entry name" value="Rnl1/2_C_sf"/>
</dbReference>
<dbReference type="NCBIfam" id="TIGR02307">
    <property type="entry name" value="RNA_lig_RNL2"/>
    <property type="match status" value="1"/>
</dbReference>
<dbReference type="Pfam" id="PF09414">
    <property type="entry name" value="RNA_ligase"/>
    <property type="match status" value="1"/>
</dbReference>
<dbReference type="SUPFAM" id="SSF56091">
    <property type="entry name" value="DNA ligase/mRNA capping enzyme, catalytic domain"/>
    <property type="match status" value="1"/>
</dbReference>
<gene>
    <name type="primary">REL1</name>
    <name type="synonym">MP52</name>
    <name type="ORF">Tb09.160.2970</name>
</gene>
<evidence type="ECO:0000250" key="1">
    <source>
        <dbReference type="UniProtKB" id="P86926"/>
    </source>
</evidence>
<evidence type="ECO:0000256" key="2">
    <source>
        <dbReference type="SAM" id="MobiDB-lite"/>
    </source>
</evidence>
<evidence type="ECO:0000269" key="3">
    <source>
    </source>
</evidence>
<evidence type="ECO:0000269" key="4">
    <source>
    </source>
</evidence>
<evidence type="ECO:0000305" key="5"/>
<evidence type="ECO:0000305" key="6">
    <source>
    </source>
</evidence>
<evidence type="ECO:0000312" key="7">
    <source>
        <dbReference type="Proteomes" id="UP000008524"/>
    </source>
</evidence>
<evidence type="ECO:0007744" key="8">
    <source>
        <dbReference type="PDB" id="1XDN"/>
    </source>
</evidence>
<evidence type="ECO:0007829" key="9">
    <source>
        <dbReference type="PDB" id="1XDN"/>
    </source>
</evidence>
<comment type="function">
    <text evidence="3 4">Essential for RNA editing. RNA editing in kinetoplastid mitochondria inserts and deletes uridylates at multiple sites in pre-mRNAs as directed by guide RNAs.</text>
</comment>
<comment type="catalytic activity">
    <reaction evidence="3 4">
        <text>ATP + (ribonucleotide)n-3'-hydroxyl + 5'-phospho-(ribonucleotide)m = (ribonucleotide)n+m + AMP + diphosphate.</text>
        <dbReference type="EC" id="6.5.1.3"/>
    </reaction>
</comment>
<comment type="subunit">
    <text evidence="1">Component of the RNA editing complex (editosome), a 1600 kDa complex composed of at least 20 proteins (By similarity). Interacts with terminal uridylyltransferase MEAT1 (By similarity).</text>
</comment>
<comment type="subcellular location">
    <subcellularLocation>
        <location evidence="1">Mitochondrion</location>
    </subcellularLocation>
</comment>
<comment type="similarity">
    <text evidence="5">Belongs to the RNA ligase 2 family.</text>
</comment>